<dbReference type="EC" id="3.1.1.106" evidence="1"/>
<dbReference type="EMBL" id="CP000822">
    <property type="protein sequence ID" value="ABV13148.1"/>
    <property type="molecule type" value="Genomic_DNA"/>
</dbReference>
<dbReference type="RefSeq" id="WP_012132884.1">
    <property type="nucleotide sequence ID" value="NC_009792.1"/>
</dbReference>
<dbReference type="SMR" id="A8AI35"/>
<dbReference type="STRING" id="290338.CKO_02022"/>
<dbReference type="GeneID" id="45135986"/>
<dbReference type="KEGG" id="cko:CKO_02022"/>
<dbReference type="HOGENOM" id="CLU_046550_5_1_6"/>
<dbReference type="OrthoDB" id="6194521at2"/>
<dbReference type="Proteomes" id="UP000008148">
    <property type="component" value="Chromosome"/>
</dbReference>
<dbReference type="GO" id="GO:0061463">
    <property type="term" value="F:O-acetyl-ADP-ribose deacetylase activity"/>
    <property type="evidence" value="ECO:0007669"/>
    <property type="project" value="UniProtKB-EC"/>
</dbReference>
<dbReference type="GO" id="GO:0001883">
    <property type="term" value="F:purine nucleoside binding"/>
    <property type="evidence" value="ECO:0007669"/>
    <property type="project" value="UniProtKB-UniRule"/>
</dbReference>
<dbReference type="GO" id="GO:0008428">
    <property type="term" value="F:ribonuclease inhibitor activity"/>
    <property type="evidence" value="ECO:0007669"/>
    <property type="project" value="UniProtKB-UniRule"/>
</dbReference>
<dbReference type="GO" id="GO:0042278">
    <property type="term" value="P:purine nucleoside metabolic process"/>
    <property type="evidence" value="ECO:0007669"/>
    <property type="project" value="UniProtKB-UniRule"/>
</dbReference>
<dbReference type="CDD" id="cd02908">
    <property type="entry name" value="Macro_OAADPr_deacetylase"/>
    <property type="match status" value="1"/>
</dbReference>
<dbReference type="Gene3D" id="3.40.220.10">
    <property type="entry name" value="Leucine Aminopeptidase, subunit E, domain 1"/>
    <property type="match status" value="1"/>
</dbReference>
<dbReference type="HAMAP" id="MF_01205">
    <property type="entry name" value="YmdB"/>
    <property type="match status" value="1"/>
</dbReference>
<dbReference type="InterPro" id="IPR002589">
    <property type="entry name" value="Macro_dom"/>
</dbReference>
<dbReference type="InterPro" id="IPR043472">
    <property type="entry name" value="Macro_dom-like"/>
</dbReference>
<dbReference type="InterPro" id="IPR024900">
    <property type="entry name" value="O-Ac-ADP-ribose_deAcase"/>
</dbReference>
<dbReference type="NCBIfam" id="NF001660">
    <property type="entry name" value="PRK00431.1-1"/>
    <property type="match status" value="1"/>
</dbReference>
<dbReference type="NCBIfam" id="NF001664">
    <property type="entry name" value="PRK00431.1-6"/>
    <property type="match status" value="1"/>
</dbReference>
<dbReference type="PANTHER" id="PTHR11106">
    <property type="entry name" value="GANGLIOSIDE INDUCED DIFFERENTIATION ASSOCIATED PROTEIN 2-RELATED"/>
    <property type="match status" value="1"/>
</dbReference>
<dbReference type="PANTHER" id="PTHR11106:SF27">
    <property type="entry name" value="MACRO DOMAIN-CONTAINING PROTEIN"/>
    <property type="match status" value="1"/>
</dbReference>
<dbReference type="Pfam" id="PF01661">
    <property type="entry name" value="Macro"/>
    <property type="match status" value="1"/>
</dbReference>
<dbReference type="SMART" id="SM00506">
    <property type="entry name" value="A1pp"/>
    <property type="match status" value="1"/>
</dbReference>
<dbReference type="SUPFAM" id="SSF52949">
    <property type="entry name" value="Macro domain-like"/>
    <property type="match status" value="1"/>
</dbReference>
<dbReference type="PROSITE" id="PS51154">
    <property type="entry name" value="MACRO"/>
    <property type="match status" value="1"/>
</dbReference>
<name>YMDB_CITK8</name>
<proteinExistence type="inferred from homology"/>
<evidence type="ECO:0000255" key="1">
    <source>
        <dbReference type="HAMAP-Rule" id="MF_01205"/>
    </source>
</evidence>
<sequence>MKSRIHVQHGDITQLTVDVIVNAANASLLGGGGVDGAIHRAAGPTLLEACKKVRQQQGECPAGHAVITLAGNLPAKAVIHTVGPVWRGGDHNESQLLEDAYFNSLQLVLANGYRSVAFPAISTGAYGYPRPAAAEIAVNTVADFLARHALPEQVYFVCYDEETARLYERLLTQQGDE</sequence>
<organism>
    <name type="scientific">Citrobacter koseri (strain ATCC BAA-895 / CDC 4225-83 / SGSC4696)</name>
    <dbReference type="NCBI Taxonomy" id="290338"/>
    <lineage>
        <taxon>Bacteria</taxon>
        <taxon>Pseudomonadati</taxon>
        <taxon>Pseudomonadota</taxon>
        <taxon>Gammaproteobacteria</taxon>
        <taxon>Enterobacterales</taxon>
        <taxon>Enterobacteriaceae</taxon>
        <taxon>Citrobacter</taxon>
    </lineage>
</organism>
<accession>A8AI35</accession>
<comment type="function">
    <text evidence="1">Deacetylates O-acetyl-ADP ribose to yield ADP-ribose and free acetate. Down-regulates ribonuclease 3 (RNase III) activity. Acts by interacting directly with the region of the ribonuclease that is required for dimerization/activation.</text>
</comment>
<comment type="catalytic activity">
    <reaction evidence="1">
        <text>3''-O-acetyl-ADP-D-ribose + H2O = ADP-D-ribose + acetate + H(+)</text>
        <dbReference type="Rhea" id="RHEA:59244"/>
        <dbReference type="ChEBI" id="CHEBI:15377"/>
        <dbReference type="ChEBI" id="CHEBI:15378"/>
        <dbReference type="ChEBI" id="CHEBI:30089"/>
        <dbReference type="ChEBI" id="CHEBI:57967"/>
        <dbReference type="ChEBI" id="CHEBI:142723"/>
        <dbReference type="EC" id="3.1.1.106"/>
    </reaction>
</comment>
<comment type="catalytic activity">
    <reaction evidence="1">
        <text>2''-O-acetyl-ADP-D-ribose + H2O = ADP-D-ribose + acetate + H(+)</text>
        <dbReference type="Rhea" id="RHEA:57060"/>
        <dbReference type="ChEBI" id="CHEBI:15377"/>
        <dbReference type="ChEBI" id="CHEBI:15378"/>
        <dbReference type="ChEBI" id="CHEBI:30089"/>
        <dbReference type="ChEBI" id="CHEBI:57967"/>
        <dbReference type="ChEBI" id="CHEBI:83767"/>
        <dbReference type="EC" id="3.1.1.106"/>
    </reaction>
</comment>
<comment type="subunit">
    <text evidence="1">Homodimer. Interacts with RNase III.</text>
</comment>
<comment type="similarity">
    <text evidence="1">Belongs to the MacroD-type family. YmdB subfamily.</text>
</comment>
<feature type="chain" id="PRO_0000409472" description="O-acetyl-ADP-ribose deacetylase">
    <location>
        <begin position="1"/>
        <end position="177"/>
    </location>
</feature>
<feature type="domain" description="Macro" evidence="1">
    <location>
        <begin position="1"/>
        <end position="175"/>
    </location>
</feature>
<feature type="active site" description="Proton acceptor" evidence="1">
    <location>
        <position position="35"/>
    </location>
</feature>
<feature type="binding site" evidence="1">
    <location>
        <begin position="11"/>
        <end position="12"/>
    </location>
    <ligand>
        <name>substrate</name>
    </ligand>
</feature>
<feature type="binding site" evidence="1">
    <location>
        <position position="25"/>
    </location>
    <ligand>
        <name>substrate</name>
    </ligand>
</feature>
<feature type="binding site" evidence="1">
    <location>
        <begin position="33"/>
        <end position="35"/>
    </location>
    <ligand>
        <name>substrate</name>
    </ligand>
</feature>
<feature type="binding site" evidence="1">
    <location>
        <begin position="122"/>
        <end position="126"/>
    </location>
    <ligand>
        <name>substrate</name>
    </ligand>
</feature>
<keyword id="KW-0378">Hydrolase</keyword>
<keyword id="KW-1185">Reference proteome</keyword>
<protein>
    <recommendedName>
        <fullName evidence="1">O-acetyl-ADP-ribose deacetylase</fullName>
        <ecNumber evidence="1">3.1.1.106</ecNumber>
    </recommendedName>
    <alternativeName>
        <fullName evidence="1">Regulator of RNase III activity</fullName>
    </alternativeName>
</protein>
<reference key="1">
    <citation type="submission" date="2007-08" db="EMBL/GenBank/DDBJ databases">
        <authorList>
            <consortium name="The Citrobacter koseri Genome Sequencing Project"/>
            <person name="McClelland M."/>
            <person name="Sanderson E.K."/>
            <person name="Porwollik S."/>
            <person name="Spieth J."/>
            <person name="Clifton W.S."/>
            <person name="Latreille P."/>
            <person name="Courtney L."/>
            <person name="Wang C."/>
            <person name="Pepin K."/>
            <person name="Bhonagiri V."/>
            <person name="Nash W."/>
            <person name="Johnson M."/>
            <person name="Thiruvilangam P."/>
            <person name="Wilson R."/>
        </authorList>
    </citation>
    <scope>NUCLEOTIDE SEQUENCE [LARGE SCALE GENOMIC DNA]</scope>
    <source>
        <strain>ATCC BAA-895 / CDC 4225-83 / SGSC4696</strain>
    </source>
</reference>
<gene>
    <name evidence="1" type="primary">ymdB</name>
    <name type="ordered locus">CKO_02022</name>
</gene>